<gene>
    <name evidence="1" type="primary">hcp</name>
    <name type="ordered locus">Hore_18290</name>
</gene>
<evidence type="ECO:0000255" key="1">
    <source>
        <dbReference type="HAMAP-Rule" id="MF_00069"/>
    </source>
</evidence>
<accession>B8CZ59</accession>
<dbReference type="EC" id="1.7.99.1" evidence="1"/>
<dbReference type="EMBL" id="CP001098">
    <property type="protein sequence ID" value="ACL70578.1"/>
    <property type="molecule type" value="Genomic_DNA"/>
</dbReference>
<dbReference type="SMR" id="B8CZ59"/>
<dbReference type="STRING" id="373903.Hore_18290"/>
<dbReference type="KEGG" id="hor:Hore_18290"/>
<dbReference type="eggNOG" id="COG1151">
    <property type="taxonomic scope" value="Bacteria"/>
</dbReference>
<dbReference type="HOGENOM" id="CLU_038344_2_0_9"/>
<dbReference type="OrthoDB" id="9761526at2"/>
<dbReference type="Proteomes" id="UP000000719">
    <property type="component" value="Chromosome"/>
</dbReference>
<dbReference type="GO" id="GO:0005737">
    <property type="term" value="C:cytoplasm"/>
    <property type="evidence" value="ECO:0007669"/>
    <property type="project" value="UniProtKB-SubCell"/>
</dbReference>
<dbReference type="GO" id="GO:0051539">
    <property type="term" value="F:4 iron, 4 sulfur cluster binding"/>
    <property type="evidence" value="ECO:0007669"/>
    <property type="project" value="UniProtKB-KW"/>
</dbReference>
<dbReference type="GO" id="GO:0050418">
    <property type="term" value="F:hydroxylamine reductase activity"/>
    <property type="evidence" value="ECO:0007669"/>
    <property type="project" value="UniProtKB-UniRule"/>
</dbReference>
<dbReference type="GO" id="GO:0046872">
    <property type="term" value="F:metal ion binding"/>
    <property type="evidence" value="ECO:0007669"/>
    <property type="project" value="UniProtKB-KW"/>
</dbReference>
<dbReference type="GO" id="GO:0004601">
    <property type="term" value="F:peroxidase activity"/>
    <property type="evidence" value="ECO:0007669"/>
    <property type="project" value="TreeGrafter"/>
</dbReference>
<dbReference type="GO" id="GO:0042542">
    <property type="term" value="P:response to hydrogen peroxide"/>
    <property type="evidence" value="ECO:0007669"/>
    <property type="project" value="TreeGrafter"/>
</dbReference>
<dbReference type="CDD" id="cd01914">
    <property type="entry name" value="HCP"/>
    <property type="match status" value="1"/>
</dbReference>
<dbReference type="FunFam" id="1.20.1270.20:FF:000001">
    <property type="entry name" value="Hydroxylamine reductase"/>
    <property type="match status" value="1"/>
</dbReference>
<dbReference type="FunFam" id="3.40.50.2030:FF:000001">
    <property type="entry name" value="Hydroxylamine reductase"/>
    <property type="match status" value="1"/>
</dbReference>
<dbReference type="FunFam" id="3.40.50.2030:FF:000002">
    <property type="entry name" value="Hydroxylamine reductase"/>
    <property type="match status" value="1"/>
</dbReference>
<dbReference type="Gene3D" id="1.20.1270.20">
    <property type="match status" value="2"/>
</dbReference>
<dbReference type="Gene3D" id="3.40.50.2030">
    <property type="match status" value="2"/>
</dbReference>
<dbReference type="HAMAP" id="MF_00069">
    <property type="entry name" value="Hydroxylam_reduct"/>
    <property type="match status" value="1"/>
</dbReference>
<dbReference type="InterPro" id="IPR004137">
    <property type="entry name" value="HCP/CODH"/>
</dbReference>
<dbReference type="InterPro" id="IPR010048">
    <property type="entry name" value="Hydroxylam_reduct"/>
</dbReference>
<dbReference type="InterPro" id="IPR016099">
    <property type="entry name" value="Prismane-like_a/b-sand"/>
</dbReference>
<dbReference type="InterPro" id="IPR011254">
    <property type="entry name" value="Prismane-like_sf"/>
</dbReference>
<dbReference type="InterPro" id="IPR016100">
    <property type="entry name" value="Prismane_a-bundle"/>
</dbReference>
<dbReference type="NCBIfam" id="TIGR01703">
    <property type="entry name" value="hybrid_clust"/>
    <property type="match status" value="1"/>
</dbReference>
<dbReference type="NCBIfam" id="NF003658">
    <property type="entry name" value="PRK05290.1"/>
    <property type="match status" value="1"/>
</dbReference>
<dbReference type="PANTHER" id="PTHR30109">
    <property type="entry name" value="HYDROXYLAMINE REDUCTASE"/>
    <property type="match status" value="1"/>
</dbReference>
<dbReference type="PANTHER" id="PTHR30109:SF0">
    <property type="entry name" value="HYDROXYLAMINE REDUCTASE"/>
    <property type="match status" value="1"/>
</dbReference>
<dbReference type="Pfam" id="PF03063">
    <property type="entry name" value="Prismane"/>
    <property type="match status" value="1"/>
</dbReference>
<dbReference type="PIRSF" id="PIRSF000076">
    <property type="entry name" value="HCP"/>
    <property type="match status" value="1"/>
</dbReference>
<dbReference type="SUPFAM" id="SSF56821">
    <property type="entry name" value="Prismane protein-like"/>
    <property type="match status" value="1"/>
</dbReference>
<name>HCP_HALOH</name>
<feature type="chain" id="PRO_1000118021" description="Hydroxylamine reductase">
    <location>
        <begin position="1"/>
        <end position="555"/>
    </location>
</feature>
<feature type="binding site" evidence="1">
    <location>
        <position position="5"/>
    </location>
    <ligand>
        <name>[4Fe-4S] cluster</name>
        <dbReference type="ChEBI" id="CHEBI:49883"/>
    </ligand>
</feature>
<feature type="binding site" evidence="1">
    <location>
        <position position="8"/>
    </location>
    <ligand>
        <name>[4Fe-4S] cluster</name>
        <dbReference type="ChEBI" id="CHEBI:49883"/>
    </ligand>
</feature>
<feature type="binding site" evidence="1">
    <location>
        <position position="17"/>
    </location>
    <ligand>
        <name>[4Fe-4S] cluster</name>
        <dbReference type="ChEBI" id="CHEBI:49883"/>
    </ligand>
</feature>
<feature type="binding site" evidence="1">
    <location>
        <position position="23"/>
    </location>
    <ligand>
        <name>[4Fe-4S] cluster</name>
        <dbReference type="ChEBI" id="CHEBI:49883"/>
    </ligand>
</feature>
<feature type="binding site" evidence="1">
    <location>
        <position position="248"/>
    </location>
    <ligand>
        <name>hybrid [4Fe-2O-2S] cluster</name>
        <dbReference type="ChEBI" id="CHEBI:60519"/>
    </ligand>
</feature>
<feature type="binding site" evidence="1">
    <location>
        <position position="272"/>
    </location>
    <ligand>
        <name>hybrid [4Fe-2O-2S] cluster</name>
        <dbReference type="ChEBI" id="CHEBI:60519"/>
    </ligand>
</feature>
<feature type="binding site" evidence="1">
    <location>
        <position position="316"/>
    </location>
    <ligand>
        <name>hybrid [4Fe-2O-2S] cluster</name>
        <dbReference type="ChEBI" id="CHEBI:60519"/>
    </ligand>
</feature>
<feature type="binding site" description="via persulfide group" evidence="1">
    <location>
        <position position="408"/>
    </location>
    <ligand>
        <name>hybrid [4Fe-2O-2S] cluster</name>
        <dbReference type="ChEBI" id="CHEBI:60519"/>
    </ligand>
</feature>
<feature type="binding site" evidence="1">
    <location>
        <position position="436"/>
    </location>
    <ligand>
        <name>hybrid [4Fe-2O-2S] cluster</name>
        <dbReference type="ChEBI" id="CHEBI:60519"/>
    </ligand>
</feature>
<feature type="binding site" evidence="1">
    <location>
        <position position="461"/>
    </location>
    <ligand>
        <name>hybrid [4Fe-2O-2S] cluster</name>
        <dbReference type="ChEBI" id="CHEBI:60519"/>
    </ligand>
</feature>
<feature type="binding site" evidence="1">
    <location>
        <position position="496"/>
    </location>
    <ligand>
        <name>hybrid [4Fe-2O-2S] cluster</name>
        <dbReference type="ChEBI" id="CHEBI:60519"/>
    </ligand>
</feature>
<feature type="binding site" evidence="1">
    <location>
        <position position="498"/>
    </location>
    <ligand>
        <name>hybrid [4Fe-2O-2S] cluster</name>
        <dbReference type="ChEBI" id="CHEBI:60519"/>
    </ligand>
</feature>
<feature type="modified residue" description="Cysteine persulfide" evidence="1">
    <location>
        <position position="408"/>
    </location>
</feature>
<protein>
    <recommendedName>
        <fullName evidence="1">Hydroxylamine reductase</fullName>
        <ecNumber evidence="1">1.7.99.1</ecNumber>
    </recommendedName>
    <alternativeName>
        <fullName evidence="1">Hybrid-cluster protein</fullName>
        <shortName evidence="1">HCP</shortName>
    </alternativeName>
    <alternativeName>
        <fullName evidence="1">Prismane protein</fullName>
    </alternativeName>
</protein>
<sequence>MSMFCFQCQEAARNKGCTVRGVCGKTGDVANLQDLLVYLLKGISIYAEKAKELGVVDRETGAFITRALFTTITNVNFDNKRFEEIIKEAFEVRDRIKNKFLKAYREKNGEEFDEKLPGMATWYSNDVSDFYAKGEEVGVLSTGDEDVRALRELLTYGLKGIAAYAEHAYILEEEDQEIYSFLQEGLVATTDNTLSADELTALVMKCGEVAVKTMALLDQANTSNYGHPEPTQVNLGVRNRPGILVSGHDLKDLEELLEQTEGKGVDVYTHGEMLPANAYPAFKKYDHFVGNYGNAWWQQKEEFEKFNGPILMTTNCLVPPKDSYRDRVYTTNVVGFSGVKHIRDRKPGEQKDFSPVIEHALKCDPPEELENGMIPVGFAHNAVMSVADKVVEAVKQGKIKRFVVMAGCDGRHRSRDYYTNVARNLPEDAVILTAGCAKYRYNKLNLGDIDGIPRILDAGQCNDSYSLVVIAQKLAEVFGVDDINELPISYDIAWYEQKAVAVLLALLYLGVKGIRLGPSLPAFLSPNVVKVLVDKFDIKPIGEVEEDVKAIMAGE</sequence>
<organism>
    <name type="scientific">Halothermothrix orenii (strain H 168 / OCM 544 / DSM 9562)</name>
    <dbReference type="NCBI Taxonomy" id="373903"/>
    <lineage>
        <taxon>Bacteria</taxon>
        <taxon>Bacillati</taxon>
        <taxon>Bacillota</taxon>
        <taxon>Clostridia</taxon>
        <taxon>Halanaerobiales</taxon>
        <taxon>Halothermotrichaceae</taxon>
        <taxon>Halothermothrix</taxon>
    </lineage>
</organism>
<proteinExistence type="inferred from homology"/>
<reference key="1">
    <citation type="journal article" date="2009" name="PLoS ONE">
        <title>Genome analysis of the anaerobic thermohalophilic bacterium Halothermothrix orenii.</title>
        <authorList>
            <person name="Mavromatis K."/>
            <person name="Ivanova N."/>
            <person name="Anderson I."/>
            <person name="Lykidis A."/>
            <person name="Hooper S.D."/>
            <person name="Sun H."/>
            <person name="Kunin V."/>
            <person name="Lapidus A."/>
            <person name="Hugenholtz P."/>
            <person name="Patel B."/>
            <person name="Kyrpides N.C."/>
        </authorList>
    </citation>
    <scope>NUCLEOTIDE SEQUENCE [LARGE SCALE GENOMIC DNA]</scope>
    <source>
        <strain>H 168 / OCM 544 / DSM 9562</strain>
    </source>
</reference>
<comment type="function">
    <text evidence="1">Catalyzes the reduction of hydroxylamine to form NH(3) and H(2)O.</text>
</comment>
<comment type="catalytic activity">
    <reaction evidence="1">
        <text>A + NH4(+) + H2O = hydroxylamine + AH2 + H(+)</text>
        <dbReference type="Rhea" id="RHEA:22052"/>
        <dbReference type="ChEBI" id="CHEBI:13193"/>
        <dbReference type="ChEBI" id="CHEBI:15377"/>
        <dbReference type="ChEBI" id="CHEBI:15378"/>
        <dbReference type="ChEBI" id="CHEBI:15429"/>
        <dbReference type="ChEBI" id="CHEBI:17499"/>
        <dbReference type="ChEBI" id="CHEBI:28938"/>
        <dbReference type="EC" id="1.7.99.1"/>
    </reaction>
</comment>
<comment type="cofactor">
    <cofactor evidence="1">
        <name>[4Fe-4S] cluster</name>
        <dbReference type="ChEBI" id="CHEBI:49883"/>
    </cofactor>
    <text evidence="1">Binds 1 [4Fe-4S] cluster.</text>
</comment>
<comment type="cofactor">
    <cofactor evidence="1">
        <name>hybrid [4Fe-2O-2S] cluster</name>
        <dbReference type="ChEBI" id="CHEBI:60519"/>
    </cofactor>
    <text evidence="1">Binds 1 hybrid [4Fe-2O-2S] cluster.</text>
</comment>
<comment type="subcellular location">
    <subcellularLocation>
        <location evidence="1">Cytoplasm</location>
    </subcellularLocation>
</comment>
<comment type="similarity">
    <text evidence="1">Belongs to the HCP family.</text>
</comment>
<keyword id="KW-0004">4Fe-4S</keyword>
<keyword id="KW-0963">Cytoplasm</keyword>
<keyword id="KW-0408">Iron</keyword>
<keyword id="KW-0411">Iron-sulfur</keyword>
<keyword id="KW-0479">Metal-binding</keyword>
<keyword id="KW-0560">Oxidoreductase</keyword>
<keyword id="KW-1185">Reference proteome</keyword>